<reference key="1">
    <citation type="journal article" date="2004" name="Gene">
        <title>The complete nucleotide sequence of wild rice (Oryza nivara) chloroplast genome: first genome wide comparative sequence analysis of wild and cultivated rice.</title>
        <authorList>
            <person name="Masood M.S."/>
            <person name="Nishikawa T."/>
            <person name="Fukuoka S."/>
            <person name="Njenga P.K."/>
            <person name="Tsudzuki T."/>
            <person name="Kadowaki K."/>
        </authorList>
    </citation>
    <scope>NUCLEOTIDE SEQUENCE [LARGE SCALE GENOMIC DNA]</scope>
    <source>
        <strain evidence="2">cv. SL10</strain>
    </source>
</reference>
<keyword id="KW-0150">Chloroplast</keyword>
<keyword id="KW-0249">Electron transport</keyword>
<keyword id="KW-0472">Membrane</keyword>
<keyword id="KW-0602">Photosynthesis</keyword>
<keyword id="KW-0934">Plastid</keyword>
<keyword id="KW-1185">Reference proteome</keyword>
<keyword id="KW-0793">Thylakoid</keyword>
<keyword id="KW-0812">Transmembrane</keyword>
<keyword id="KW-1133">Transmembrane helix</keyword>
<keyword id="KW-0813">Transport</keyword>
<gene>
    <name evidence="1" type="primary">petL</name>
</gene>
<feature type="chain" id="PRO_0000220463" description="Cytochrome b6-f complex subunit 6">
    <location>
        <begin position="1"/>
        <end position="31"/>
    </location>
</feature>
<feature type="transmembrane region" description="Helical" evidence="1">
    <location>
        <begin position="4"/>
        <end position="24"/>
    </location>
</feature>
<name>PETL_ORYNI</name>
<protein>
    <recommendedName>
        <fullName evidence="1">Cytochrome b6-f complex subunit 6</fullName>
    </recommendedName>
    <alternativeName>
        <fullName evidence="1">Cytochrome b6-f complex subunit PetL</fullName>
    </alternativeName>
    <alternativeName>
        <fullName evidence="1">Cytochrome b6-f complex subunit VI</fullName>
    </alternativeName>
</protein>
<dbReference type="EMBL" id="AP006728">
    <property type="protein sequence ID" value="BAD26797.1"/>
    <property type="molecule type" value="Genomic_DNA"/>
</dbReference>
<dbReference type="RefSeq" id="YP_052768.1">
    <property type="nucleotide sequence ID" value="NC_005973.1"/>
</dbReference>
<dbReference type="SMR" id="Q6ENF5"/>
<dbReference type="GeneID" id="2885886"/>
<dbReference type="Proteomes" id="UP000006591">
    <property type="component" value="Chloroplast"/>
</dbReference>
<dbReference type="GO" id="GO:0009535">
    <property type="term" value="C:chloroplast thylakoid membrane"/>
    <property type="evidence" value="ECO:0007669"/>
    <property type="project" value="UniProtKB-SubCell"/>
</dbReference>
<dbReference type="GO" id="GO:0009512">
    <property type="term" value="C:cytochrome b6f complex"/>
    <property type="evidence" value="ECO:0007669"/>
    <property type="project" value="InterPro"/>
</dbReference>
<dbReference type="GO" id="GO:0009536">
    <property type="term" value="C:plastid"/>
    <property type="evidence" value="ECO:0000305"/>
    <property type="project" value="Gramene"/>
</dbReference>
<dbReference type="GO" id="GO:0045158">
    <property type="term" value="F:electron transporter, transferring electrons within cytochrome b6/f complex of photosystem II activity"/>
    <property type="evidence" value="ECO:0007669"/>
    <property type="project" value="UniProtKB-UniRule"/>
</dbReference>
<dbReference type="GO" id="GO:0015979">
    <property type="term" value="P:photosynthesis"/>
    <property type="evidence" value="ECO:0007669"/>
    <property type="project" value="UniProtKB-KW"/>
</dbReference>
<dbReference type="HAMAP" id="MF_00433">
    <property type="entry name" value="Cytb6_f_PetL"/>
    <property type="match status" value="1"/>
</dbReference>
<dbReference type="InterPro" id="IPR007802">
    <property type="entry name" value="Cyt_b6/f_cplx_su6"/>
</dbReference>
<dbReference type="PANTHER" id="PTHR37266">
    <property type="entry name" value="CYTOCHROME B6-F COMPLEX SUBUNIT 6"/>
    <property type="match status" value="1"/>
</dbReference>
<dbReference type="PANTHER" id="PTHR37266:SF1">
    <property type="entry name" value="CYTOCHROME B6-F COMPLEX SUBUNIT 6"/>
    <property type="match status" value="1"/>
</dbReference>
<dbReference type="Pfam" id="PF05115">
    <property type="entry name" value="PetL"/>
    <property type="match status" value="1"/>
</dbReference>
<dbReference type="SUPFAM" id="SSF103436">
    <property type="entry name" value="PetL subunit of the cytochrome b6f complex"/>
    <property type="match status" value="1"/>
</dbReference>
<geneLocation type="chloroplast"/>
<organism>
    <name type="scientific">Oryza nivara</name>
    <name type="common">Indian wild rice</name>
    <name type="synonym">Oryza sativa f. spontanea</name>
    <dbReference type="NCBI Taxonomy" id="4536"/>
    <lineage>
        <taxon>Eukaryota</taxon>
        <taxon>Viridiplantae</taxon>
        <taxon>Streptophyta</taxon>
        <taxon>Embryophyta</taxon>
        <taxon>Tracheophyta</taxon>
        <taxon>Spermatophyta</taxon>
        <taxon>Magnoliopsida</taxon>
        <taxon>Liliopsida</taxon>
        <taxon>Poales</taxon>
        <taxon>Poaceae</taxon>
        <taxon>BOP clade</taxon>
        <taxon>Oryzoideae</taxon>
        <taxon>Oryzeae</taxon>
        <taxon>Oryzinae</taxon>
        <taxon>Oryza</taxon>
    </lineage>
</organism>
<evidence type="ECO:0000255" key="1">
    <source>
        <dbReference type="HAMAP-Rule" id="MF_00433"/>
    </source>
</evidence>
<evidence type="ECO:0000312" key="2">
    <source>
        <dbReference type="Proteomes" id="UP000006591"/>
    </source>
</evidence>
<comment type="function">
    <text evidence="1">Component of the cytochrome b6-f complex, which mediates electron transfer between photosystem II (PSII) and photosystem I (PSI), cyclic electron flow around PSI, and state transitions. PetL is important for photoautotrophic growth as well as for electron transfer efficiency and stability of the cytochrome b6-f complex.</text>
</comment>
<comment type="subunit">
    <text evidence="1">The 4 large subunits of the cytochrome b6-f complex are cytochrome b6, subunit IV (17 kDa polypeptide, PetD), cytochrome f and the Rieske protein, while the 4 small subunits are PetG, PetL, PetM and PetN. The complex functions as a dimer.</text>
</comment>
<comment type="subcellular location">
    <subcellularLocation>
        <location evidence="1">Plastid</location>
        <location evidence="1">Chloroplast thylakoid membrane</location>
        <topology evidence="1">Single-pass membrane protein</topology>
    </subcellularLocation>
</comment>
<comment type="similarity">
    <text evidence="1">Belongs to the PetL family.</text>
</comment>
<proteinExistence type="inferred from homology"/>
<sequence length="31" mass="3442">MLTITSYFGFLLAALTLTLALFIGLNKIRLI</sequence>
<accession>Q6ENF5</accession>